<sequence length="166" mass="17594">MSLNIETKKVAVEEISAAIANAQTLVVAEYRGISVSSMTELRANARKEGVYLRVLKNTLARRAVQGTSFAELADQMVGPLVYAASEDAVAAAKVLHQFAKKDDKIVVKAGSYNGEVMNAAQVAELASIPSREELLSKLLFVMQAPVSGFARGLAALAEKKAGEEAA</sequence>
<evidence type="ECO:0000255" key="1">
    <source>
        <dbReference type="HAMAP-Rule" id="MF_00362"/>
    </source>
</evidence>
<evidence type="ECO:0000305" key="2"/>
<accession>A1KRG4</accession>
<keyword id="KW-0687">Ribonucleoprotein</keyword>
<keyword id="KW-0689">Ribosomal protein</keyword>
<keyword id="KW-0694">RNA-binding</keyword>
<keyword id="KW-0699">rRNA-binding</keyword>
<comment type="function">
    <text evidence="1">Forms part of the ribosomal stalk, playing a central role in the interaction of the ribosome with GTP-bound translation factors.</text>
</comment>
<comment type="subunit">
    <text evidence="1">Part of the ribosomal stalk of the 50S ribosomal subunit. The N-terminus interacts with L11 and the large rRNA to form the base of the stalk. The C-terminus forms an elongated spine to which L12 dimers bind in a sequential fashion forming a multimeric L10(L12)X complex.</text>
</comment>
<comment type="similarity">
    <text evidence="1">Belongs to the universal ribosomal protein uL10 family.</text>
</comment>
<name>RL10_NEIMF</name>
<gene>
    <name evidence="1" type="primary">rplJ</name>
    <name type="ordered locus">NMC0121</name>
</gene>
<dbReference type="EMBL" id="AM421808">
    <property type="protein sequence ID" value="CAM09440.1"/>
    <property type="molecule type" value="Genomic_DNA"/>
</dbReference>
<dbReference type="RefSeq" id="WP_002215373.1">
    <property type="nucleotide sequence ID" value="NC_008767.1"/>
</dbReference>
<dbReference type="SMR" id="A1KRG4"/>
<dbReference type="GeneID" id="93387205"/>
<dbReference type="KEGG" id="nmc:NMC0121"/>
<dbReference type="HOGENOM" id="CLU_092227_0_1_4"/>
<dbReference type="Proteomes" id="UP000002286">
    <property type="component" value="Chromosome"/>
</dbReference>
<dbReference type="GO" id="GO:0015934">
    <property type="term" value="C:large ribosomal subunit"/>
    <property type="evidence" value="ECO:0007669"/>
    <property type="project" value="InterPro"/>
</dbReference>
<dbReference type="GO" id="GO:0070180">
    <property type="term" value="F:large ribosomal subunit rRNA binding"/>
    <property type="evidence" value="ECO:0007669"/>
    <property type="project" value="UniProtKB-UniRule"/>
</dbReference>
<dbReference type="GO" id="GO:0003735">
    <property type="term" value="F:structural constituent of ribosome"/>
    <property type="evidence" value="ECO:0007669"/>
    <property type="project" value="InterPro"/>
</dbReference>
<dbReference type="GO" id="GO:0006412">
    <property type="term" value="P:translation"/>
    <property type="evidence" value="ECO:0007669"/>
    <property type="project" value="UniProtKB-UniRule"/>
</dbReference>
<dbReference type="CDD" id="cd05797">
    <property type="entry name" value="Ribosomal_L10"/>
    <property type="match status" value="1"/>
</dbReference>
<dbReference type="FunFam" id="3.30.70.1730:FF:000008">
    <property type="entry name" value="50S ribosomal protein L10"/>
    <property type="match status" value="1"/>
</dbReference>
<dbReference type="Gene3D" id="3.30.70.1730">
    <property type="match status" value="1"/>
</dbReference>
<dbReference type="Gene3D" id="6.10.250.290">
    <property type="match status" value="1"/>
</dbReference>
<dbReference type="HAMAP" id="MF_00362">
    <property type="entry name" value="Ribosomal_uL10"/>
    <property type="match status" value="1"/>
</dbReference>
<dbReference type="InterPro" id="IPR001790">
    <property type="entry name" value="Ribosomal_uL10"/>
</dbReference>
<dbReference type="InterPro" id="IPR043141">
    <property type="entry name" value="Ribosomal_uL10-like_sf"/>
</dbReference>
<dbReference type="InterPro" id="IPR022973">
    <property type="entry name" value="Ribosomal_uL10_bac"/>
</dbReference>
<dbReference type="InterPro" id="IPR047865">
    <property type="entry name" value="Ribosomal_uL10_bac_type"/>
</dbReference>
<dbReference type="InterPro" id="IPR002363">
    <property type="entry name" value="Ribosomal_uL10_CS_bac"/>
</dbReference>
<dbReference type="NCBIfam" id="NF000955">
    <property type="entry name" value="PRK00099.1-1"/>
    <property type="match status" value="1"/>
</dbReference>
<dbReference type="PANTHER" id="PTHR11560">
    <property type="entry name" value="39S RIBOSOMAL PROTEIN L10, MITOCHONDRIAL"/>
    <property type="match status" value="1"/>
</dbReference>
<dbReference type="Pfam" id="PF00466">
    <property type="entry name" value="Ribosomal_L10"/>
    <property type="match status" value="1"/>
</dbReference>
<dbReference type="SUPFAM" id="SSF160369">
    <property type="entry name" value="Ribosomal protein L10-like"/>
    <property type="match status" value="1"/>
</dbReference>
<dbReference type="PROSITE" id="PS01109">
    <property type="entry name" value="RIBOSOMAL_L10"/>
    <property type="match status" value="1"/>
</dbReference>
<feature type="chain" id="PRO_1000005543" description="Large ribosomal subunit protein uL10">
    <location>
        <begin position="1"/>
        <end position="166"/>
    </location>
</feature>
<proteinExistence type="inferred from homology"/>
<reference key="1">
    <citation type="journal article" date="2007" name="PLoS Genet.">
        <title>Meningococcal genetic variation mechanisms viewed through comparative analysis of serogroup C strain FAM18.</title>
        <authorList>
            <person name="Bentley S.D."/>
            <person name="Vernikos G.S."/>
            <person name="Snyder L.A.S."/>
            <person name="Churcher C."/>
            <person name="Arrowsmith C."/>
            <person name="Chillingworth T."/>
            <person name="Cronin A."/>
            <person name="Davis P.H."/>
            <person name="Holroyd N.E."/>
            <person name="Jagels K."/>
            <person name="Maddison M."/>
            <person name="Moule S."/>
            <person name="Rabbinowitsch E."/>
            <person name="Sharp S."/>
            <person name="Unwin L."/>
            <person name="Whitehead S."/>
            <person name="Quail M.A."/>
            <person name="Achtman M."/>
            <person name="Barrell B.G."/>
            <person name="Saunders N.J."/>
            <person name="Parkhill J."/>
        </authorList>
    </citation>
    <scope>NUCLEOTIDE SEQUENCE [LARGE SCALE GENOMIC DNA]</scope>
    <source>
        <strain>ATCC 700532 / DSM 15464 / FAM18</strain>
    </source>
</reference>
<protein>
    <recommendedName>
        <fullName evidence="1">Large ribosomal subunit protein uL10</fullName>
    </recommendedName>
    <alternativeName>
        <fullName evidence="2">50S ribosomal protein L10</fullName>
    </alternativeName>
</protein>
<organism>
    <name type="scientific">Neisseria meningitidis serogroup C / serotype 2a (strain ATCC 700532 / DSM 15464 / FAM18)</name>
    <dbReference type="NCBI Taxonomy" id="272831"/>
    <lineage>
        <taxon>Bacteria</taxon>
        <taxon>Pseudomonadati</taxon>
        <taxon>Pseudomonadota</taxon>
        <taxon>Betaproteobacteria</taxon>
        <taxon>Neisseriales</taxon>
        <taxon>Neisseriaceae</taxon>
        <taxon>Neisseria</taxon>
    </lineage>
</organism>